<gene>
    <name evidence="1" type="primary">leuD</name>
    <name type="ordered locus">VC_2493</name>
</gene>
<accession>Q9KP80</accession>
<sequence length="200" mass="22546">MSGFQQHTGLVVPLDAANVDTDAIIPKQFLQKVNRTGFGKHLFHDWRFLDDAGEKANPEFVMNQPRYQDASILLARENFGCGSSREHAPWALADYGIRVMIAPSFADIFYGNSINNQMVPVRLTEQEVDELFTYVHDTEGATITVDLEALSVTANGKTYHFEIDDFRRHCLLNGLDNIGLTLQHEAKIAEYEAKIPSFLK</sequence>
<evidence type="ECO:0000255" key="1">
    <source>
        <dbReference type="HAMAP-Rule" id="MF_01031"/>
    </source>
</evidence>
<reference key="1">
    <citation type="journal article" date="2000" name="Nature">
        <title>DNA sequence of both chromosomes of the cholera pathogen Vibrio cholerae.</title>
        <authorList>
            <person name="Heidelberg J.F."/>
            <person name="Eisen J.A."/>
            <person name="Nelson W.C."/>
            <person name="Clayton R.A."/>
            <person name="Gwinn M.L."/>
            <person name="Dodson R.J."/>
            <person name="Haft D.H."/>
            <person name="Hickey E.K."/>
            <person name="Peterson J.D."/>
            <person name="Umayam L.A."/>
            <person name="Gill S.R."/>
            <person name="Nelson K.E."/>
            <person name="Read T.D."/>
            <person name="Tettelin H."/>
            <person name="Richardson D.L."/>
            <person name="Ermolaeva M.D."/>
            <person name="Vamathevan J.J."/>
            <person name="Bass S."/>
            <person name="Qin H."/>
            <person name="Dragoi I."/>
            <person name="Sellers P."/>
            <person name="McDonald L.A."/>
            <person name="Utterback T.R."/>
            <person name="Fleischmann R.D."/>
            <person name="Nierman W.C."/>
            <person name="White O."/>
            <person name="Salzberg S.L."/>
            <person name="Smith H.O."/>
            <person name="Colwell R.R."/>
            <person name="Mekalanos J.J."/>
            <person name="Venter J.C."/>
            <person name="Fraser C.M."/>
        </authorList>
    </citation>
    <scope>NUCLEOTIDE SEQUENCE [LARGE SCALE GENOMIC DNA]</scope>
    <source>
        <strain>ATCC 39315 / El Tor Inaba N16961</strain>
    </source>
</reference>
<feature type="chain" id="PRO_0000141905" description="3-isopropylmalate dehydratase small subunit">
    <location>
        <begin position="1"/>
        <end position="200"/>
    </location>
</feature>
<proteinExistence type="inferred from homology"/>
<keyword id="KW-0028">Amino-acid biosynthesis</keyword>
<keyword id="KW-0100">Branched-chain amino acid biosynthesis</keyword>
<keyword id="KW-0432">Leucine biosynthesis</keyword>
<keyword id="KW-0456">Lyase</keyword>
<keyword id="KW-1185">Reference proteome</keyword>
<protein>
    <recommendedName>
        <fullName evidence="1">3-isopropylmalate dehydratase small subunit</fullName>
        <ecNumber evidence="1">4.2.1.33</ecNumber>
    </recommendedName>
    <alternativeName>
        <fullName evidence="1">Alpha-IPM isomerase</fullName>
        <shortName evidence="1">IPMI</shortName>
    </alternativeName>
    <alternativeName>
        <fullName evidence="1">Isopropylmalate isomerase</fullName>
    </alternativeName>
</protein>
<organism>
    <name type="scientific">Vibrio cholerae serotype O1 (strain ATCC 39315 / El Tor Inaba N16961)</name>
    <dbReference type="NCBI Taxonomy" id="243277"/>
    <lineage>
        <taxon>Bacteria</taxon>
        <taxon>Pseudomonadati</taxon>
        <taxon>Pseudomonadota</taxon>
        <taxon>Gammaproteobacteria</taxon>
        <taxon>Vibrionales</taxon>
        <taxon>Vibrionaceae</taxon>
        <taxon>Vibrio</taxon>
    </lineage>
</organism>
<comment type="function">
    <text evidence="1">Catalyzes the isomerization between 2-isopropylmalate and 3-isopropylmalate, via the formation of 2-isopropylmaleate.</text>
</comment>
<comment type="catalytic activity">
    <reaction evidence="1">
        <text>(2R,3S)-3-isopropylmalate = (2S)-2-isopropylmalate</text>
        <dbReference type="Rhea" id="RHEA:32287"/>
        <dbReference type="ChEBI" id="CHEBI:1178"/>
        <dbReference type="ChEBI" id="CHEBI:35121"/>
        <dbReference type="EC" id="4.2.1.33"/>
    </reaction>
</comment>
<comment type="pathway">
    <text evidence="1">Amino-acid biosynthesis; L-leucine biosynthesis; L-leucine from 3-methyl-2-oxobutanoate: step 2/4.</text>
</comment>
<comment type="subunit">
    <text evidence="1">Heterodimer of LeuC and LeuD.</text>
</comment>
<comment type="similarity">
    <text evidence="1">Belongs to the LeuD family. LeuD type 1 subfamily.</text>
</comment>
<dbReference type="EC" id="4.2.1.33" evidence="1"/>
<dbReference type="EMBL" id="AE003852">
    <property type="protein sequence ID" value="AAF95635.1"/>
    <property type="molecule type" value="Genomic_DNA"/>
</dbReference>
<dbReference type="PIR" id="A82071">
    <property type="entry name" value="A82071"/>
</dbReference>
<dbReference type="RefSeq" id="NP_232122.1">
    <property type="nucleotide sequence ID" value="NC_002505.1"/>
</dbReference>
<dbReference type="RefSeq" id="WP_000012771.1">
    <property type="nucleotide sequence ID" value="NZ_LT906614.1"/>
</dbReference>
<dbReference type="SMR" id="Q9KP80"/>
<dbReference type="STRING" id="243277.VC_2493"/>
<dbReference type="DNASU" id="2615150"/>
<dbReference type="EnsemblBacteria" id="AAF95635">
    <property type="protein sequence ID" value="AAF95635"/>
    <property type="gene ID" value="VC_2493"/>
</dbReference>
<dbReference type="KEGG" id="vch:VC_2493"/>
<dbReference type="PATRIC" id="fig|243277.26.peg.2375"/>
<dbReference type="eggNOG" id="COG0066">
    <property type="taxonomic scope" value="Bacteria"/>
</dbReference>
<dbReference type="HOGENOM" id="CLU_081378_0_3_6"/>
<dbReference type="UniPathway" id="UPA00048">
    <property type="reaction ID" value="UER00071"/>
</dbReference>
<dbReference type="Proteomes" id="UP000000584">
    <property type="component" value="Chromosome 1"/>
</dbReference>
<dbReference type="GO" id="GO:0009316">
    <property type="term" value="C:3-isopropylmalate dehydratase complex"/>
    <property type="evidence" value="ECO:0007669"/>
    <property type="project" value="InterPro"/>
</dbReference>
<dbReference type="GO" id="GO:0003861">
    <property type="term" value="F:3-isopropylmalate dehydratase activity"/>
    <property type="evidence" value="ECO:0007669"/>
    <property type="project" value="UniProtKB-UniRule"/>
</dbReference>
<dbReference type="GO" id="GO:0009098">
    <property type="term" value="P:L-leucine biosynthetic process"/>
    <property type="evidence" value="ECO:0007669"/>
    <property type="project" value="UniProtKB-UniRule"/>
</dbReference>
<dbReference type="CDD" id="cd01577">
    <property type="entry name" value="IPMI_Swivel"/>
    <property type="match status" value="1"/>
</dbReference>
<dbReference type="FunFam" id="3.20.19.10:FF:000003">
    <property type="entry name" value="3-isopropylmalate dehydratase small subunit"/>
    <property type="match status" value="1"/>
</dbReference>
<dbReference type="Gene3D" id="3.20.19.10">
    <property type="entry name" value="Aconitase, domain 4"/>
    <property type="match status" value="1"/>
</dbReference>
<dbReference type="HAMAP" id="MF_01031">
    <property type="entry name" value="LeuD_type1"/>
    <property type="match status" value="1"/>
</dbReference>
<dbReference type="InterPro" id="IPR004431">
    <property type="entry name" value="3-IsopropMal_deHydase_ssu"/>
</dbReference>
<dbReference type="InterPro" id="IPR015928">
    <property type="entry name" value="Aconitase/3IPM_dehydase_swvl"/>
</dbReference>
<dbReference type="InterPro" id="IPR000573">
    <property type="entry name" value="AconitaseA/IPMdHydase_ssu_swvl"/>
</dbReference>
<dbReference type="InterPro" id="IPR033940">
    <property type="entry name" value="IPMI_Swivel"/>
</dbReference>
<dbReference type="InterPro" id="IPR050075">
    <property type="entry name" value="LeuD"/>
</dbReference>
<dbReference type="NCBIfam" id="TIGR00171">
    <property type="entry name" value="leuD"/>
    <property type="match status" value="1"/>
</dbReference>
<dbReference type="NCBIfam" id="NF002458">
    <property type="entry name" value="PRK01641.1"/>
    <property type="match status" value="1"/>
</dbReference>
<dbReference type="PANTHER" id="PTHR43345:SF5">
    <property type="entry name" value="3-ISOPROPYLMALATE DEHYDRATASE SMALL SUBUNIT"/>
    <property type="match status" value="1"/>
</dbReference>
<dbReference type="PANTHER" id="PTHR43345">
    <property type="entry name" value="3-ISOPROPYLMALATE DEHYDRATASE SMALL SUBUNIT 2-RELATED-RELATED"/>
    <property type="match status" value="1"/>
</dbReference>
<dbReference type="Pfam" id="PF00694">
    <property type="entry name" value="Aconitase_C"/>
    <property type="match status" value="1"/>
</dbReference>
<dbReference type="SUPFAM" id="SSF52016">
    <property type="entry name" value="LeuD/IlvD-like"/>
    <property type="match status" value="1"/>
</dbReference>
<name>LEUD_VIBCH</name>